<reference key="1">
    <citation type="journal article" date="2008" name="Genome Biol.">
        <title>The complete genome, comparative and functional analysis of Stenotrophomonas maltophilia reveals an organism heavily shielded by drug resistance determinants.</title>
        <authorList>
            <person name="Crossman L.C."/>
            <person name="Gould V.C."/>
            <person name="Dow J.M."/>
            <person name="Vernikos G.S."/>
            <person name="Okazaki A."/>
            <person name="Sebaihia M."/>
            <person name="Saunders D."/>
            <person name="Arrowsmith C."/>
            <person name="Carver T."/>
            <person name="Peters N."/>
            <person name="Adlem E."/>
            <person name="Kerhornou A."/>
            <person name="Lord A."/>
            <person name="Murphy L."/>
            <person name="Seeger K."/>
            <person name="Squares R."/>
            <person name="Rutter S."/>
            <person name="Quail M.A."/>
            <person name="Rajandream M.A."/>
            <person name="Harris D."/>
            <person name="Churcher C."/>
            <person name="Bentley S.D."/>
            <person name="Parkhill J."/>
            <person name="Thomson N.R."/>
            <person name="Avison M.B."/>
        </authorList>
    </citation>
    <scope>NUCLEOTIDE SEQUENCE [LARGE SCALE GENOMIC DNA]</scope>
    <source>
        <strain>K279a</strain>
    </source>
</reference>
<accession>B2FQX2</accession>
<name>MNMA_STRMK</name>
<evidence type="ECO:0000255" key="1">
    <source>
        <dbReference type="HAMAP-Rule" id="MF_00144"/>
    </source>
</evidence>
<keyword id="KW-0067">ATP-binding</keyword>
<keyword id="KW-0963">Cytoplasm</keyword>
<keyword id="KW-1015">Disulfide bond</keyword>
<keyword id="KW-0547">Nucleotide-binding</keyword>
<keyword id="KW-1185">Reference proteome</keyword>
<keyword id="KW-0694">RNA-binding</keyword>
<keyword id="KW-0808">Transferase</keyword>
<keyword id="KW-0819">tRNA processing</keyword>
<keyword id="KW-0820">tRNA-binding</keyword>
<feature type="chain" id="PRO_0000349808" description="tRNA-specific 2-thiouridylase MnmA">
    <location>
        <begin position="1"/>
        <end position="380"/>
    </location>
</feature>
<feature type="region of interest" description="Interaction with target base in tRNA" evidence="1">
    <location>
        <begin position="94"/>
        <end position="96"/>
    </location>
</feature>
<feature type="region of interest" description="Interaction with tRNA" evidence="1">
    <location>
        <begin position="145"/>
        <end position="147"/>
    </location>
</feature>
<feature type="region of interest" description="Interaction with tRNA" evidence="1">
    <location>
        <begin position="308"/>
        <end position="309"/>
    </location>
</feature>
<feature type="active site" description="Nucleophile" evidence="1">
    <location>
        <position position="99"/>
    </location>
</feature>
<feature type="active site" description="Cysteine persulfide intermediate" evidence="1">
    <location>
        <position position="195"/>
    </location>
</feature>
<feature type="binding site" evidence="1">
    <location>
        <begin position="9"/>
        <end position="16"/>
    </location>
    <ligand>
        <name>ATP</name>
        <dbReference type="ChEBI" id="CHEBI:30616"/>
    </ligand>
</feature>
<feature type="binding site" evidence="1">
    <location>
        <position position="35"/>
    </location>
    <ligand>
        <name>ATP</name>
        <dbReference type="ChEBI" id="CHEBI:30616"/>
    </ligand>
</feature>
<feature type="binding site" evidence="1">
    <location>
        <position position="123"/>
    </location>
    <ligand>
        <name>ATP</name>
        <dbReference type="ChEBI" id="CHEBI:30616"/>
    </ligand>
</feature>
<feature type="site" description="Interaction with tRNA" evidence="1">
    <location>
        <position position="124"/>
    </location>
</feature>
<feature type="site" description="Interaction with tRNA" evidence="1">
    <location>
        <position position="341"/>
    </location>
</feature>
<feature type="disulfide bond" description="Alternate" evidence="1">
    <location>
        <begin position="99"/>
        <end position="195"/>
    </location>
</feature>
<organism>
    <name type="scientific">Stenotrophomonas maltophilia (strain K279a)</name>
    <dbReference type="NCBI Taxonomy" id="522373"/>
    <lineage>
        <taxon>Bacteria</taxon>
        <taxon>Pseudomonadati</taxon>
        <taxon>Pseudomonadota</taxon>
        <taxon>Gammaproteobacteria</taxon>
        <taxon>Lysobacterales</taxon>
        <taxon>Lysobacteraceae</taxon>
        <taxon>Stenotrophomonas</taxon>
        <taxon>Stenotrophomonas maltophilia group</taxon>
    </lineage>
</organism>
<dbReference type="EC" id="2.8.1.13" evidence="1"/>
<dbReference type="EMBL" id="AM743169">
    <property type="protein sequence ID" value="CAQ45825.1"/>
    <property type="molecule type" value="Genomic_DNA"/>
</dbReference>
<dbReference type="RefSeq" id="WP_012480134.1">
    <property type="nucleotide sequence ID" value="NC_010943.1"/>
</dbReference>
<dbReference type="SMR" id="B2FQX2"/>
<dbReference type="EnsemblBacteria" id="CAQ45825">
    <property type="protein sequence ID" value="CAQ45825"/>
    <property type="gene ID" value="Smlt2332"/>
</dbReference>
<dbReference type="KEGG" id="sml:Smlt2332"/>
<dbReference type="PATRIC" id="fig|522373.3.peg.2226"/>
<dbReference type="eggNOG" id="COG0482">
    <property type="taxonomic scope" value="Bacteria"/>
</dbReference>
<dbReference type="HOGENOM" id="CLU_035188_1_0_6"/>
<dbReference type="Proteomes" id="UP000008840">
    <property type="component" value="Chromosome"/>
</dbReference>
<dbReference type="GO" id="GO:0005737">
    <property type="term" value="C:cytoplasm"/>
    <property type="evidence" value="ECO:0007669"/>
    <property type="project" value="UniProtKB-SubCell"/>
</dbReference>
<dbReference type="GO" id="GO:0005524">
    <property type="term" value="F:ATP binding"/>
    <property type="evidence" value="ECO:0007669"/>
    <property type="project" value="UniProtKB-KW"/>
</dbReference>
<dbReference type="GO" id="GO:0000049">
    <property type="term" value="F:tRNA binding"/>
    <property type="evidence" value="ECO:0007669"/>
    <property type="project" value="UniProtKB-KW"/>
</dbReference>
<dbReference type="GO" id="GO:0103016">
    <property type="term" value="F:tRNA-uridine 2-sulfurtransferase activity"/>
    <property type="evidence" value="ECO:0007669"/>
    <property type="project" value="UniProtKB-EC"/>
</dbReference>
<dbReference type="GO" id="GO:0002143">
    <property type="term" value="P:tRNA wobble position uridine thiolation"/>
    <property type="evidence" value="ECO:0007669"/>
    <property type="project" value="TreeGrafter"/>
</dbReference>
<dbReference type="CDD" id="cd01998">
    <property type="entry name" value="MnmA_TRMU-like"/>
    <property type="match status" value="1"/>
</dbReference>
<dbReference type="FunFam" id="2.30.30.280:FF:000001">
    <property type="entry name" value="tRNA-specific 2-thiouridylase MnmA"/>
    <property type="match status" value="1"/>
</dbReference>
<dbReference type="FunFam" id="2.40.30.10:FF:000023">
    <property type="entry name" value="tRNA-specific 2-thiouridylase MnmA"/>
    <property type="match status" value="1"/>
</dbReference>
<dbReference type="FunFam" id="3.40.50.620:FF:000004">
    <property type="entry name" value="tRNA-specific 2-thiouridylase MnmA"/>
    <property type="match status" value="1"/>
</dbReference>
<dbReference type="Gene3D" id="2.30.30.280">
    <property type="entry name" value="Adenine nucleotide alpha hydrolases-like domains"/>
    <property type="match status" value="1"/>
</dbReference>
<dbReference type="Gene3D" id="3.40.50.620">
    <property type="entry name" value="HUPs"/>
    <property type="match status" value="1"/>
</dbReference>
<dbReference type="Gene3D" id="2.40.30.10">
    <property type="entry name" value="Translation factors"/>
    <property type="match status" value="1"/>
</dbReference>
<dbReference type="HAMAP" id="MF_00144">
    <property type="entry name" value="tRNA_thiouridyl_MnmA"/>
    <property type="match status" value="1"/>
</dbReference>
<dbReference type="InterPro" id="IPR004506">
    <property type="entry name" value="MnmA-like"/>
</dbReference>
<dbReference type="InterPro" id="IPR046885">
    <property type="entry name" value="MnmA-like_C"/>
</dbReference>
<dbReference type="InterPro" id="IPR046884">
    <property type="entry name" value="MnmA-like_central"/>
</dbReference>
<dbReference type="InterPro" id="IPR023382">
    <property type="entry name" value="MnmA-like_central_sf"/>
</dbReference>
<dbReference type="InterPro" id="IPR014729">
    <property type="entry name" value="Rossmann-like_a/b/a_fold"/>
</dbReference>
<dbReference type="NCBIfam" id="NF001138">
    <property type="entry name" value="PRK00143.1"/>
    <property type="match status" value="1"/>
</dbReference>
<dbReference type="NCBIfam" id="TIGR00420">
    <property type="entry name" value="trmU"/>
    <property type="match status" value="1"/>
</dbReference>
<dbReference type="PANTHER" id="PTHR11933:SF5">
    <property type="entry name" value="MITOCHONDRIAL TRNA-SPECIFIC 2-THIOURIDYLASE 1"/>
    <property type="match status" value="1"/>
</dbReference>
<dbReference type="PANTHER" id="PTHR11933">
    <property type="entry name" value="TRNA 5-METHYLAMINOMETHYL-2-THIOURIDYLATE -METHYLTRANSFERASE"/>
    <property type="match status" value="1"/>
</dbReference>
<dbReference type="Pfam" id="PF03054">
    <property type="entry name" value="tRNA_Me_trans"/>
    <property type="match status" value="1"/>
</dbReference>
<dbReference type="Pfam" id="PF20258">
    <property type="entry name" value="tRNA_Me_trans_C"/>
    <property type="match status" value="1"/>
</dbReference>
<dbReference type="Pfam" id="PF20259">
    <property type="entry name" value="tRNA_Me_trans_M"/>
    <property type="match status" value="1"/>
</dbReference>
<dbReference type="SUPFAM" id="SSF52402">
    <property type="entry name" value="Adenine nucleotide alpha hydrolases-like"/>
    <property type="match status" value="1"/>
</dbReference>
<comment type="function">
    <text evidence="1">Catalyzes the 2-thiolation of uridine at the wobble position (U34) of tRNA, leading to the formation of s(2)U34.</text>
</comment>
<comment type="catalytic activity">
    <reaction evidence="1">
        <text>S-sulfanyl-L-cysteinyl-[protein] + uridine(34) in tRNA + AH2 + ATP = 2-thiouridine(34) in tRNA + L-cysteinyl-[protein] + A + AMP + diphosphate + H(+)</text>
        <dbReference type="Rhea" id="RHEA:47032"/>
        <dbReference type="Rhea" id="RHEA-COMP:10131"/>
        <dbReference type="Rhea" id="RHEA-COMP:11726"/>
        <dbReference type="Rhea" id="RHEA-COMP:11727"/>
        <dbReference type="Rhea" id="RHEA-COMP:11728"/>
        <dbReference type="ChEBI" id="CHEBI:13193"/>
        <dbReference type="ChEBI" id="CHEBI:15378"/>
        <dbReference type="ChEBI" id="CHEBI:17499"/>
        <dbReference type="ChEBI" id="CHEBI:29950"/>
        <dbReference type="ChEBI" id="CHEBI:30616"/>
        <dbReference type="ChEBI" id="CHEBI:33019"/>
        <dbReference type="ChEBI" id="CHEBI:61963"/>
        <dbReference type="ChEBI" id="CHEBI:65315"/>
        <dbReference type="ChEBI" id="CHEBI:87170"/>
        <dbReference type="ChEBI" id="CHEBI:456215"/>
        <dbReference type="EC" id="2.8.1.13"/>
    </reaction>
</comment>
<comment type="subcellular location">
    <subcellularLocation>
        <location evidence="1">Cytoplasm</location>
    </subcellularLocation>
</comment>
<comment type="similarity">
    <text evidence="1">Belongs to the MnmA/TRMU family.</text>
</comment>
<sequence>MSTPRVMVGVSGGVDSSVAAWRLVQQGEAVAGLFMQNWADDGSGDCRAEDDRRDAVAVCGLLGIPFHFRDFSSEYWQGVFEHFLAEYAAGRTPNPDVLCNREVKFKHFLDAARELGAERIATGHYARVTQRGHQWLLLRGADRSKDQSYFLHQLGQEQLAATLFPIGDLEKTDLRRIARDVSLPTHAKKDSTGICFIGERDFREFLGRYLPAKPGQILDPADGSVIAEHPGVFYFTLGQREGLNIGGVRGRPAAPWYVVGKDVASNVLYVDQDRDSKWMLSERLRSETAHWIAGSPPARRFECTAQTRYRQPDEPCTVQVLDDGSVLVTFARPQRAVTPGQSLVLYDGDVCLGGAVIAATDAPLEQRLRTTPSPFEVIAA</sequence>
<proteinExistence type="inferred from homology"/>
<protein>
    <recommendedName>
        <fullName evidence="1">tRNA-specific 2-thiouridylase MnmA</fullName>
        <ecNumber evidence="1">2.8.1.13</ecNumber>
    </recommendedName>
</protein>
<gene>
    <name evidence="1" type="primary">mnmA</name>
    <name type="ordered locus">Smlt2332</name>
</gene>